<accession>Q9K9V8</accession>
<name>CARA_HALH5</name>
<reference key="1">
    <citation type="journal article" date="2000" name="Nucleic Acids Res.">
        <title>Complete genome sequence of the alkaliphilic bacterium Bacillus halodurans and genomic sequence comparison with Bacillus subtilis.</title>
        <authorList>
            <person name="Takami H."/>
            <person name="Nakasone K."/>
            <person name="Takaki Y."/>
            <person name="Maeno G."/>
            <person name="Sasaki R."/>
            <person name="Masui N."/>
            <person name="Fuji F."/>
            <person name="Hirama C."/>
            <person name="Nakamura Y."/>
            <person name="Ogasawara N."/>
            <person name="Kuhara S."/>
            <person name="Horikoshi K."/>
        </authorList>
    </citation>
    <scope>NUCLEOTIDE SEQUENCE [LARGE SCALE GENOMIC DNA]</scope>
    <source>
        <strain>ATCC BAA-125 / DSM 18197 / FERM 7344 / JCM 9153 / C-125</strain>
    </source>
</reference>
<protein>
    <recommendedName>
        <fullName evidence="2">Carbamoyl phosphate synthase pyrimidine-specific small chain</fullName>
        <ecNumber evidence="1">6.3.5.5</ecNumber>
    </recommendedName>
    <alternativeName>
        <fullName evidence="1">Carbamoyl phosphate synthetase glutamine chain 1</fullName>
    </alternativeName>
</protein>
<gene>
    <name evidence="1" type="primary">pyrAA</name>
    <name type="ordered locus">BH2537</name>
</gene>
<dbReference type="EC" id="6.3.5.5" evidence="1"/>
<dbReference type="EMBL" id="BA000004">
    <property type="protein sequence ID" value="BAB06256.1"/>
    <property type="molecule type" value="Genomic_DNA"/>
</dbReference>
<dbReference type="PIR" id="A83967">
    <property type="entry name" value="A83967"/>
</dbReference>
<dbReference type="RefSeq" id="WP_010898688.1">
    <property type="nucleotide sequence ID" value="NC_002570.2"/>
</dbReference>
<dbReference type="SMR" id="Q9K9V8"/>
<dbReference type="STRING" id="272558.gene:10728435"/>
<dbReference type="MEROPS" id="C26.A33"/>
<dbReference type="GeneID" id="87598049"/>
<dbReference type="KEGG" id="bha:BH2537"/>
<dbReference type="eggNOG" id="COG0505">
    <property type="taxonomic scope" value="Bacteria"/>
</dbReference>
<dbReference type="HOGENOM" id="CLU_035901_2_1_9"/>
<dbReference type="OrthoDB" id="9804328at2"/>
<dbReference type="UniPathway" id="UPA00070">
    <property type="reaction ID" value="UER00115"/>
</dbReference>
<dbReference type="Proteomes" id="UP000001258">
    <property type="component" value="Chromosome"/>
</dbReference>
<dbReference type="GO" id="GO:0005524">
    <property type="term" value="F:ATP binding"/>
    <property type="evidence" value="ECO:0007669"/>
    <property type="project" value="UniProtKB-UniRule"/>
</dbReference>
<dbReference type="GO" id="GO:0004088">
    <property type="term" value="F:carbamoyl-phosphate synthase (glutamine-hydrolyzing) activity"/>
    <property type="evidence" value="ECO:0007669"/>
    <property type="project" value="UniProtKB-UniRule"/>
</dbReference>
<dbReference type="GO" id="GO:0004359">
    <property type="term" value="F:glutaminase activity"/>
    <property type="evidence" value="ECO:0007669"/>
    <property type="project" value="RHEA"/>
</dbReference>
<dbReference type="GO" id="GO:0006207">
    <property type="term" value="P:'de novo' pyrimidine nucleobase biosynthetic process"/>
    <property type="evidence" value="ECO:0007669"/>
    <property type="project" value="InterPro"/>
</dbReference>
<dbReference type="GO" id="GO:0044205">
    <property type="term" value="P:'de novo' UMP biosynthetic process"/>
    <property type="evidence" value="ECO:0007669"/>
    <property type="project" value="UniProtKB-UniRule"/>
</dbReference>
<dbReference type="GO" id="GO:0006541">
    <property type="term" value="P:glutamine metabolic process"/>
    <property type="evidence" value="ECO:0007669"/>
    <property type="project" value="InterPro"/>
</dbReference>
<dbReference type="GO" id="GO:0006526">
    <property type="term" value="P:L-arginine biosynthetic process"/>
    <property type="evidence" value="ECO:0007669"/>
    <property type="project" value="UniProtKB-UniRule"/>
</dbReference>
<dbReference type="CDD" id="cd01744">
    <property type="entry name" value="GATase1_CPSase"/>
    <property type="match status" value="1"/>
</dbReference>
<dbReference type="FunFam" id="3.40.50.880:FF:000029">
    <property type="entry name" value="Carbamoyl-phosphate synthase small chain"/>
    <property type="match status" value="1"/>
</dbReference>
<dbReference type="FunFam" id="3.50.30.20:FF:000001">
    <property type="entry name" value="Carbamoyl-phosphate synthase small chain"/>
    <property type="match status" value="1"/>
</dbReference>
<dbReference type="Gene3D" id="3.40.50.880">
    <property type="match status" value="1"/>
</dbReference>
<dbReference type="Gene3D" id="3.50.30.20">
    <property type="entry name" value="Carbamoyl-phosphate synthase small subunit, N-terminal domain"/>
    <property type="match status" value="1"/>
</dbReference>
<dbReference type="HAMAP" id="MF_01209">
    <property type="entry name" value="CPSase_S_chain"/>
    <property type="match status" value="1"/>
</dbReference>
<dbReference type="InterPro" id="IPR050472">
    <property type="entry name" value="Anth_synth/Amidotransfase"/>
</dbReference>
<dbReference type="InterPro" id="IPR006274">
    <property type="entry name" value="CarbamoylP_synth_ssu"/>
</dbReference>
<dbReference type="InterPro" id="IPR002474">
    <property type="entry name" value="CarbamoylP_synth_ssu_N"/>
</dbReference>
<dbReference type="InterPro" id="IPR036480">
    <property type="entry name" value="CarbP_synth_ssu_N_sf"/>
</dbReference>
<dbReference type="InterPro" id="IPR029062">
    <property type="entry name" value="Class_I_gatase-like"/>
</dbReference>
<dbReference type="InterPro" id="IPR035686">
    <property type="entry name" value="CPSase_GATase1"/>
</dbReference>
<dbReference type="InterPro" id="IPR017926">
    <property type="entry name" value="GATASE"/>
</dbReference>
<dbReference type="NCBIfam" id="TIGR01368">
    <property type="entry name" value="CPSaseIIsmall"/>
    <property type="match status" value="1"/>
</dbReference>
<dbReference type="NCBIfam" id="NF009475">
    <property type="entry name" value="PRK12838.1"/>
    <property type="match status" value="1"/>
</dbReference>
<dbReference type="PANTHER" id="PTHR43418:SF7">
    <property type="entry name" value="CARBAMOYL-PHOSPHATE SYNTHASE SMALL CHAIN"/>
    <property type="match status" value="1"/>
</dbReference>
<dbReference type="PANTHER" id="PTHR43418">
    <property type="entry name" value="MULTIFUNCTIONAL TRYPTOPHAN BIOSYNTHESIS PROTEIN-RELATED"/>
    <property type="match status" value="1"/>
</dbReference>
<dbReference type="Pfam" id="PF00988">
    <property type="entry name" value="CPSase_sm_chain"/>
    <property type="match status" value="1"/>
</dbReference>
<dbReference type="Pfam" id="PF00117">
    <property type="entry name" value="GATase"/>
    <property type="match status" value="1"/>
</dbReference>
<dbReference type="PRINTS" id="PR00097">
    <property type="entry name" value="ANTSNTHASEII"/>
</dbReference>
<dbReference type="PRINTS" id="PR00099">
    <property type="entry name" value="CPSGATASE"/>
</dbReference>
<dbReference type="PRINTS" id="PR00096">
    <property type="entry name" value="GATASE"/>
</dbReference>
<dbReference type="SMART" id="SM01097">
    <property type="entry name" value="CPSase_sm_chain"/>
    <property type="match status" value="1"/>
</dbReference>
<dbReference type="SUPFAM" id="SSF52021">
    <property type="entry name" value="Carbamoyl phosphate synthetase, small subunit N-terminal domain"/>
    <property type="match status" value="1"/>
</dbReference>
<dbReference type="SUPFAM" id="SSF52317">
    <property type="entry name" value="Class I glutamine amidotransferase-like"/>
    <property type="match status" value="1"/>
</dbReference>
<dbReference type="PROSITE" id="PS51273">
    <property type="entry name" value="GATASE_TYPE_1"/>
    <property type="match status" value="1"/>
</dbReference>
<evidence type="ECO:0000255" key="1">
    <source>
        <dbReference type="HAMAP-Rule" id="MF_01209"/>
    </source>
</evidence>
<evidence type="ECO:0000305" key="2"/>
<feature type="chain" id="PRO_0000112251" description="Carbamoyl phosphate synthase pyrimidine-specific small chain">
    <location>
        <begin position="1"/>
        <end position="362"/>
    </location>
</feature>
<feature type="domain" description="Glutamine amidotransferase type-1" evidence="1">
    <location>
        <begin position="171"/>
        <end position="358"/>
    </location>
</feature>
<feature type="region of interest" description="CPSase" evidence="1">
    <location>
        <begin position="1"/>
        <end position="168"/>
    </location>
</feature>
<feature type="active site" description="Nucleophile" evidence="1">
    <location>
        <position position="246"/>
    </location>
</feature>
<feature type="active site" evidence="1">
    <location>
        <position position="331"/>
    </location>
</feature>
<feature type="active site" evidence="1">
    <location>
        <position position="333"/>
    </location>
</feature>
<feature type="binding site" evidence="1">
    <location>
        <position position="45"/>
    </location>
    <ligand>
        <name>L-glutamine</name>
        <dbReference type="ChEBI" id="CHEBI:58359"/>
    </ligand>
</feature>
<feature type="binding site" evidence="1">
    <location>
        <position position="219"/>
    </location>
    <ligand>
        <name>L-glutamine</name>
        <dbReference type="ChEBI" id="CHEBI:58359"/>
    </ligand>
</feature>
<feature type="binding site" evidence="1">
    <location>
        <position position="221"/>
    </location>
    <ligand>
        <name>L-glutamine</name>
        <dbReference type="ChEBI" id="CHEBI:58359"/>
    </ligand>
</feature>
<feature type="binding site" evidence="1">
    <location>
        <position position="247"/>
    </location>
    <ligand>
        <name>L-glutamine</name>
        <dbReference type="ChEBI" id="CHEBI:58359"/>
    </ligand>
</feature>
<feature type="binding site" evidence="1">
    <location>
        <position position="250"/>
    </location>
    <ligand>
        <name>L-glutamine</name>
        <dbReference type="ChEBI" id="CHEBI:58359"/>
    </ligand>
</feature>
<feature type="binding site" evidence="1">
    <location>
        <position position="288"/>
    </location>
    <ligand>
        <name>L-glutamine</name>
        <dbReference type="ChEBI" id="CHEBI:58359"/>
    </ligand>
</feature>
<feature type="binding site" evidence="1">
    <location>
        <position position="290"/>
    </location>
    <ligand>
        <name>L-glutamine</name>
        <dbReference type="ChEBI" id="CHEBI:58359"/>
    </ligand>
</feature>
<feature type="binding site" evidence="1">
    <location>
        <position position="291"/>
    </location>
    <ligand>
        <name>L-glutamine</name>
        <dbReference type="ChEBI" id="CHEBI:58359"/>
    </ligand>
</feature>
<proteinExistence type="inferred from homology"/>
<sequence>MKRQLILEDGSVFVGKGFGSDREMSGEVVFNTGMTGYQEMLSDPSYCGQIVTLTYPLIGNYGINRDDFESMNPAIHGLIVKEACDIPSNWRSEESLDSLLKAKQIPGLSGIDTRKLTRLIRMHGTLKGQLCPLDVDVEQIVQELKATPTPTDQVSRVSTRDPYHVPGPGKRVVLVDYGMKHNILQELIRRNCEVFVVPYHTSAEEVLRLGPDGVLLSNGPGNPEDVSEGVEMIRNLLGKVPLFGICLGHQLFALACGAKTEKLRFGHRGSNHPVRERSTGLIEITAQNHGYTVTEGSLVNTDLIVTHEAVNDGTIEGLAHKVHPAFSVQYHPEASPGPEDSNVLFDRFIKLMESNKHRALTV</sequence>
<comment type="function">
    <text evidence="2">Small subunit of the glutamine-dependent carbamoyl phosphate synthetase (CPSase). CPSase catalyzes the formation of carbamoyl phosphate from the ammonia moiety of glutamine, carbonate, and phosphate donated by ATP, constituting the first step of the biosynthetic pathway leading to pyrimidine nucleotides. The small subunit (glutamine amidotransferase) binds and cleaves glutamine to supply the large subunit with the substrate ammonia.</text>
</comment>
<comment type="catalytic activity">
    <reaction evidence="1">
        <text>hydrogencarbonate + L-glutamine + 2 ATP + H2O = carbamoyl phosphate + L-glutamate + 2 ADP + phosphate + 2 H(+)</text>
        <dbReference type="Rhea" id="RHEA:18633"/>
        <dbReference type="ChEBI" id="CHEBI:15377"/>
        <dbReference type="ChEBI" id="CHEBI:15378"/>
        <dbReference type="ChEBI" id="CHEBI:17544"/>
        <dbReference type="ChEBI" id="CHEBI:29985"/>
        <dbReference type="ChEBI" id="CHEBI:30616"/>
        <dbReference type="ChEBI" id="CHEBI:43474"/>
        <dbReference type="ChEBI" id="CHEBI:58228"/>
        <dbReference type="ChEBI" id="CHEBI:58359"/>
        <dbReference type="ChEBI" id="CHEBI:456216"/>
        <dbReference type="EC" id="6.3.5.5"/>
    </reaction>
</comment>
<comment type="catalytic activity">
    <molecule>Carbamoyl phosphate synthase pyrimidine-specific small chain</molecule>
    <reaction evidence="1">
        <text>L-glutamine + H2O = L-glutamate + NH4(+)</text>
        <dbReference type="Rhea" id="RHEA:15889"/>
        <dbReference type="ChEBI" id="CHEBI:15377"/>
        <dbReference type="ChEBI" id="CHEBI:28938"/>
        <dbReference type="ChEBI" id="CHEBI:29985"/>
        <dbReference type="ChEBI" id="CHEBI:58359"/>
    </reaction>
</comment>
<comment type="pathway">
    <text evidence="1">Pyrimidine metabolism; UMP biosynthesis via de novo pathway; (S)-dihydroorotate from bicarbonate: step 1/3.</text>
</comment>
<comment type="subunit">
    <text evidence="1">Composed of two chains; the small (or glutamine) chain promotes the hydrolysis of glutamine to ammonia, which is used by the large (or ammonia) chain to synthesize carbamoyl phosphate. Tetramer of heterodimers (alpha,beta)4.</text>
</comment>
<comment type="similarity">
    <text evidence="1">Belongs to the CarA family.</text>
</comment>
<organism>
    <name type="scientific">Halalkalibacterium halodurans (strain ATCC BAA-125 / DSM 18197 / FERM 7344 / JCM 9153 / C-125)</name>
    <name type="common">Bacillus halodurans</name>
    <dbReference type="NCBI Taxonomy" id="272558"/>
    <lineage>
        <taxon>Bacteria</taxon>
        <taxon>Bacillati</taxon>
        <taxon>Bacillota</taxon>
        <taxon>Bacilli</taxon>
        <taxon>Bacillales</taxon>
        <taxon>Bacillaceae</taxon>
        <taxon>Halalkalibacterium (ex Joshi et al. 2022)</taxon>
    </lineage>
</organism>
<keyword id="KW-0067">ATP-binding</keyword>
<keyword id="KW-0315">Glutamine amidotransferase</keyword>
<keyword id="KW-0436">Ligase</keyword>
<keyword id="KW-0547">Nucleotide-binding</keyword>
<keyword id="KW-0665">Pyrimidine biosynthesis</keyword>
<keyword id="KW-1185">Reference proteome</keyword>